<evidence type="ECO:0000255" key="1">
    <source>
        <dbReference type="HAMAP-Rule" id="MF_01224"/>
    </source>
</evidence>
<proteinExistence type="inferred from homology"/>
<sequence length="157" mass="16726">MLTHLDSQGRAHMVDVTDKSVTFREAVAEARVRMLPETLKMIVDGAHPKGDVFAVARIAGIQAAKKTSDLIPLCHPLMLTGVKVELSADGADSVHIVARCKLSGQTGVEMEALTAASVAALTIYDMCKAVDRGMTIESIRLLEKLGGKSGHFKADQA</sequence>
<dbReference type="EC" id="4.6.1.17" evidence="1"/>
<dbReference type="EMBL" id="AM181176">
    <property type="protein sequence ID" value="CAY47259.1"/>
    <property type="molecule type" value="Genomic_DNA"/>
</dbReference>
<dbReference type="RefSeq" id="WP_012722340.1">
    <property type="nucleotide sequence ID" value="NC_012660.1"/>
</dbReference>
<dbReference type="SMR" id="C3KEA5"/>
<dbReference type="STRING" id="294.SRM1_01006"/>
<dbReference type="eggNOG" id="COG0315">
    <property type="taxonomic scope" value="Bacteria"/>
</dbReference>
<dbReference type="HOGENOM" id="CLU_074693_1_1_6"/>
<dbReference type="OrthoDB" id="9794429at2"/>
<dbReference type="UniPathway" id="UPA00344"/>
<dbReference type="GO" id="GO:0061799">
    <property type="term" value="F:cyclic pyranopterin monophosphate synthase activity"/>
    <property type="evidence" value="ECO:0007669"/>
    <property type="project" value="UniProtKB-UniRule"/>
</dbReference>
<dbReference type="GO" id="GO:0006777">
    <property type="term" value="P:Mo-molybdopterin cofactor biosynthetic process"/>
    <property type="evidence" value="ECO:0007669"/>
    <property type="project" value="UniProtKB-UniRule"/>
</dbReference>
<dbReference type="CDD" id="cd01420">
    <property type="entry name" value="MoaC_PE"/>
    <property type="match status" value="1"/>
</dbReference>
<dbReference type="FunFam" id="3.30.70.640:FF:000001">
    <property type="entry name" value="Cyclic pyranopterin monophosphate synthase"/>
    <property type="match status" value="1"/>
</dbReference>
<dbReference type="Gene3D" id="3.30.70.640">
    <property type="entry name" value="Molybdopterin cofactor biosynthesis C (MoaC) domain"/>
    <property type="match status" value="1"/>
</dbReference>
<dbReference type="HAMAP" id="MF_01224_B">
    <property type="entry name" value="MoaC_B"/>
    <property type="match status" value="1"/>
</dbReference>
<dbReference type="InterPro" id="IPR023045">
    <property type="entry name" value="MoaC"/>
</dbReference>
<dbReference type="InterPro" id="IPR047594">
    <property type="entry name" value="MoaC_bact/euk"/>
</dbReference>
<dbReference type="InterPro" id="IPR036522">
    <property type="entry name" value="MoaC_sf"/>
</dbReference>
<dbReference type="InterPro" id="IPR050105">
    <property type="entry name" value="MoCo_biosynth_MoaA/MoaC"/>
</dbReference>
<dbReference type="InterPro" id="IPR002820">
    <property type="entry name" value="Mopterin_CF_biosynth-C_dom"/>
</dbReference>
<dbReference type="NCBIfam" id="TIGR00581">
    <property type="entry name" value="moaC"/>
    <property type="match status" value="1"/>
</dbReference>
<dbReference type="NCBIfam" id="NF006870">
    <property type="entry name" value="PRK09364.1"/>
    <property type="match status" value="1"/>
</dbReference>
<dbReference type="PANTHER" id="PTHR22960:SF29">
    <property type="entry name" value="CYCLIC PYRANOPTERIN MONOPHOSPHATE SYNTHASE"/>
    <property type="match status" value="1"/>
</dbReference>
<dbReference type="PANTHER" id="PTHR22960">
    <property type="entry name" value="MOLYBDOPTERIN COFACTOR SYNTHESIS PROTEIN A"/>
    <property type="match status" value="1"/>
</dbReference>
<dbReference type="Pfam" id="PF01967">
    <property type="entry name" value="MoaC"/>
    <property type="match status" value="1"/>
</dbReference>
<dbReference type="SUPFAM" id="SSF55040">
    <property type="entry name" value="Molybdenum cofactor biosynthesis protein C, MoaC"/>
    <property type="match status" value="1"/>
</dbReference>
<name>MOAC_PSEFS</name>
<organism>
    <name type="scientific">Pseudomonas fluorescens (strain SBW25)</name>
    <dbReference type="NCBI Taxonomy" id="216595"/>
    <lineage>
        <taxon>Bacteria</taxon>
        <taxon>Pseudomonadati</taxon>
        <taxon>Pseudomonadota</taxon>
        <taxon>Gammaproteobacteria</taxon>
        <taxon>Pseudomonadales</taxon>
        <taxon>Pseudomonadaceae</taxon>
        <taxon>Pseudomonas</taxon>
    </lineage>
</organism>
<feature type="chain" id="PRO_1000213992" description="Cyclic pyranopterin monophosphate synthase">
    <location>
        <begin position="1"/>
        <end position="157"/>
    </location>
</feature>
<feature type="active site" evidence="1">
    <location>
        <position position="125"/>
    </location>
</feature>
<feature type="binding site" evidence="1">
    <location>
        <begin position="73"/>
        <end position="75"/>
    </location>
    <ligand>
        <name>substrate</name>
    </ligand>
</feature>
<feature type="binding site" evidence="1">
    <location>
        <begin position="110"/>
        <end position="111"/>
    </location>
    <ligand>
        <name>substrate</name>
    </ligand>
</feature>
<accession>C3KEA5</accession>
<keyword id="KW-0456">Lyase</keyword>
<keyword id="KW-0501">Molybdenum cofactor biosynthesis</keyword>
<comment type="function">
    <text evidence="1">Catalyzes the conversion of (8S)-3',8-cyclo-7,8-dihydroguanosine 5'-triphosphate to cyclic pyranopterin monophosphate (cPMP).</text>
</comment>
<comment type="catalytic activity">
    <reaction evidence="1">
        <text>(8S)-3',8-cyclo-7,8-dihydroguanosine 5'-triphosphate = cyclic pyranopterin phosphate + diphosphate</text>
        <dbReference type="Rhea" id="RHEA:49580"/>
        <dbReference type="ChEBI" id="CHEBI:33019"/>
        <dbReference type="ChEBI" id="CHEBI:59648"/>
        <dbReference type="ChEBI" id="CHEBI:131766"/>
        <dbReference type="EC" id="4.6.1.17"/>
    </reaction>
</comment>
<comment type="pathway">
    <text evidence="1">Cofactor biosynthesis; molybdopterin biosynthesis.</text>
</comment>
<comment type="subunit">
    <text evidence="1">Homohexamer; trimer of dimers.</text>
</comment>
<comment type="similarity">
    <text evidence="1">Belongs to the MoaC family.</text>
</comment>
<protein>
    <recommendedName>
        <fullName evidence="1">Cyclic pyranopterin monophosphate synthase</fullName>
        <ecNumber evidence="1">4.6.1.17</ecNumber>
    </recommendedName>
    <alternativeName>
        <fullName evidence="1">Molybdenum cofactor biosynthesis protein C</fullName>
    </alternativeName>
</protein>
<reference key="1">
    <citation type="journal article" date="2009" name="Genome Biol.">
        <title>Genomic and genetic analyses of diversity and plant interactions of Pseudomonas fluorescens.</title>
        <authorList>
            <person name="Silby M.W."/>
            <person name="Cerdeno-Tarraga A.M."/>
            <person name="Vernikos G.S."/>
            <person name="Giddens S.R."/>
            <person name="Jackson R.W."/>
            <person name="Preston G.M."/>
            <person name="Zhang X.-X."/>
            <person name="Moon C.D."/>
            <person name="Gehrig S.M."/>
            <person name="Godfrey S.A.C."/>
            <person name="Knight C.G."/>
            <person name="Malone J.G."/>
            <person name="Robinson Z."/>
            <person name="Spiers A.J."/>
            <person name="Harris S."/>
            <person name="Challis G.L."/>
            <person name="Yaxley A.M."/>
            <person name="Harris D."/>
            <person name="Seeger K."/>
            <person name="Murphy L."/>
            <person name="Rutter S."/>
            <person name="Squares R."/>
            <person name="Quail M.A."/>
            <person name="Saunders E."/>
            <person name="Mavromatis K."/>
            <person name="Brettin T.S."/>
            <person name="Bentley S.D."/>
            <person name="Hothersall J."/>
            <person name="Stephens E."/>
            <person name="Thomas C.M."/>
            <person name="Parkhill J."/>
            <person name="Levy S.B."/>
            <person name="Rainey P.B."/>
            <person name="Thomson N.R."/>
        </authorList>
    </citation>
    <scope>NUCLEOTIDE SEQUENCE [LARGE SCALE GENOMIC DNA]</scope>
    <source>
        <strain>SBW25</strain>
    </source>
</reference>
<gene>
    <name evidence="1" type="primary">moaC</name>
    <name type="ordered locus">PFLU_0995</name>
</gene>